<feature type="initiator methionine" description="Removed" evidence="7">
    <location>
        <position position="1"/>
    </location>
</feature>
<feature type="chain" id="PRO_0000053346" description="Myoglobin">
    <location>
        <begin position="2"/>
        <end position="154"/>
    </location>
</feature>
<feature type="domain" description="Globin" evidence="6">
    <location>
        <begin position="2"/>
        <end position="148"/>
    </location>
</feature>
<feature type="binding site" evidence="4">
    <location>
        <position position="65"/>
    </location>
    <ligand>
        <name>nitrite</name>
        <dbReference type="ChEBI" id="CHEBI:16301"/>
    </ligand>
</feature>
<feature type="binding site" evidence="3 6">
    <location>
        <position position="65"/>
    </location>
    <ligand>
        <name>O2</name>
        <dbReference type="ChEBI" id="CHEBI:15379"/>
    </ligand>
</feature>
<feature type="binding site" description="proximal binding residue" evidence="1">
    <location>
        <position position="94"/>
    </location>
    <ligand>
        <name>heme b</name>
        <dbReference type="ChEBI" id="CHEBI:60344"/>
    </ligand>
    <ligandPart>
        <name>Fe</name>
        <dbReference type="ChEBI" id="CHEBI:18248"/>
    </ligandPart>
</feature>
<feature type="modified residue" description="Phosphoserine" evidence="5">
    <location>
        <position position="4"/>
    </location>
</feature>
<keyword id="KW-0963">Cytoplasm</keyword>
<keyword id="KW-0903">Direct protein sequencing</keyword>
<keyword id="KW-0349">Heme</keyword>
<keyword id="KW-0408">Iron</keyword>
<keyword id="KW-0479">Metal-binding</keyword>
<keyword id="KW-0514">Muscle protein</keyword>
<keyword id="KW-0560">Oxidoreductase</keyword>
<keyword id="KW-0561">Oxygen transport</keyword>
<keyword id="KW-0597">Phosphoprotein</keyword>
<keyword id="KW-0813">Transport</keyword>
<comment type="function">
    <text evidence="1">Monomeric heme protein which primary function is to store oxygen and facilitate its diffusion within muscle tissues. Reversibly binds oxygen through a pentacoordinated heme iron and enables its timely and efficient release as needed during periods of heightened demand. Depending on the oxidative conditions of tissues and cells, and in addition to its ability to bind oxygen, it also has a nitrite reductase activity whereby it regulates the production of bioactive nitric oxide. Under stress conditions, like hypoxia and anoxia, it also protects cells against reactive oxygen species thanks to its pseudoperoxidase activity.</text>
</comment>
<comment type="catalytic activity">
    <reaction evidence="1">
        <text>Fe(III)-heme b-[protein] + nitric oxide + H2O = Fe(II)-heme b-[protein] + nitrite + 2 H(+)</text>
        <dbReference type="Rhea" id="RHEA:77711"/>
        <dbReference type="Rhea" id="RHEA-COMP:18975"/>
        <dbReference type="Rhea" id="RHEA-COMP:18976"/>
        <dbReference type="ChEBI" id="CHEBI:15377"/>
        <dbReference type="ChEBI" id="CHEBI:15378"/>
        <dbReference type="ChEBI" id="CHEBI:16301"/>
        <dbReference type="ChEBI" id="CHEBI:16480"/>
        <dbReference type="ChEBI" id="CHEBI:55376"/>
        <dbReference type="ChEBI" id="CHEBI:60344"/>
    </reaction>
    <physiologicalReaction direction="right-to-left" evidence="1">
        <dbReference type="Rhea" id="RHEA:77713"/>
    </physiologicalReaction>
</comment>
<comment type="catalytic activity">
    <reaction evidence="1">
        <text>H2O2 + AH2 = A + 2 H2O</text>
        <dbReference type="Rhea" id="RHEA:30275"/>
        <dbReference type="ChEBI" id="CHEBI:13193"/>
        <dbReference type="ChEBI" id="CHEBI:15377"/>
        <dbReference type="ChEBI" id="CHEBI:16240"/>
        <dbReference type="ChEBI" id="CHEBI:17499"/>
    </reaction>
</comment>
<comment type="subunit">
    <text evidence="2">Monomeric.</text>
</comment>
<comment type="subcellular location">
    <subcellularLocation>
        <location evidence="1">Cytoplasm</location>
        <location evidence="1">Sarcoplasm</location>
    </subcellularLocation>
</comment>
<comment type="similarity">
    <text evidence="6">Belongs to the globin family.</text>
</comment>
<accession>P02195</accession>
<organism>
    <name type="scientific">Tachyglossus aculeatus aculeatus</name>
    <name type="common">Southeast Australian short-beaked echidna</name>
    <dbReference type="NCBI Taxonomy" id="49271"/>
    <lineage>
        <taxon>Eukaryota</taxon>
        <taxon>Metazoa</taxon>
        <taxon>Chordata</taxon>
        <taxon>Craniata</taxon>
        <taxon>Vertebrata</taxon>
        <taxon>Euteleostomi</taxon>
        <taxon>Mammalia</taxon>
        <taxon>Monotremata</taxon>
        <taxon>Tachyglossidae</taxon>
        <taxon>Tachyglossus</taxon>
    </lineage>
</organism>
<name>MYG_TACAC</name>
<protein>
    <recommendedName>
        <fullName>Myoglobin</fullName>
    </recommendedName>
    <alternativeName>
        <fullName evidence="1">Nitrite reductase MB</fullName>
        <ecNumber evidence="1">1.7.-.-</ecNumber>
    </alternativeName>
    <alternativeName>
        <fullName evidence="1">Pseudoperoxidase MB</fullName>
        <ecNumber evidence="1">1.11.1.-</ecNumber>
    </alternativeName>
</protein>
<evidence type="ECO:0000250" key="1">
    <source>
        <dbReference type="UniProtKB" id="P02144"/>
    </source>
</evidence>
<evidence type="ECO:0000250" key="2">
    <source>
        <dbReference type="UniProtKB" id="P02185"/>
    </source>
</evidence>
<evidence type="ECO:0000250" key="3">
    <source>
        <dbReference type="UniProtKB" id="P02189"/>
    </source>
</evidence>
<evidence type="ECO:0000250" key="4">
    <source>
        <dbReference type="UniProtKB" id="P68082"/>
    </source>
</evidence>
<evidence type="ECO:0000250" key="5">
    <source>
        <dbReference type="UniProtKB" id="Q9QZ76"/>
    </source>
</evidence>
<evidence type="ECO:0000255" key="6">
    <source>
        <dbReference type="PROSITE-ProRule" id="PRU00238"/>
    </source>
</evidence>
<evidence type="ECO:0000269" key="7">
    <source>
    </source>
</evidence>
<dbReference type="EC" id="1.7.-.-" evidence="1"/>
<dbReference type="EC" id="1.11.1.-" evidence="1"/>
<dbReference type="PIR" id="A02516">
    <property type="entry name" value="MYTG"/>
</dbReference>
<dbReference type="SMR" id="P02195"/>
<dbReference type="GO" id="GO:0070062">
    <property type="term" value="C:extracellular exosome"/>
    <property type="evidence" value="ECO:0007669"/>
    <property type="project" value="TreeGrafter"/>
</dbReference>
<dbReference type="GO" id="GO:0016528">
    <property type="term" value="C:sarcoplasm"/>
    <property type="evidence" value="ECO:0000250"/>
    <property type="project" value="UniProtKB"/>
</dbReference>
<dbReference type="GO" id="GO:0020037">
    <property type="term" value="F:heme binding"/>
    <property type="evidence" value="ECO:0007669"/>
    <property type="project" value="InterPro"/>
</dbReference>
<dbReference type="GO" id="GO:0046872">
    <property type="term" value="F:metal ion binding"/>
    <property type="evidence" value="ECO:0007669"/>
    <property type="project" value="UniProtKB-KW"/>
</dbReference>
<dbReference type="GO" id="GO:0098809">
    <property type="term" value="F:nitrite reductase activity"/>
    <property type="evidence" value="ECO:0000250"/>
    <property type="project" value="UniProtKB"/>
</dbReference>
<dbReference type="GO" id="GO:0019825">
    <property type="term" value="F:oxygen binding"/>
    <property type="evidence" value="ECO:0007669"/>
    <property type="project" value="InterPro"/>
</dbReference>
<dbReference type="GO" id="GO:0005344">
    <property type="term" value="F:oxygen carrier activity"/>
    <property type="evidence" value="ECO:0000250"/>
    <property type="project" value="UniProtKB"/>
</dbReference>
<dbReference type="GO" id="GO:0004601">
    <property type="term" value="F:peroxidase activity"/>
    <property type="evidence" value="ECO:0000250"/>
    <property type="project" value="UniProtKB"/>
</dbReference>
<dbReference type="GO" id="GO:0019430">
    <property type="term" value="P:removal of superoxide radicals"/>
    <property type="evidence" value="ECO:0000250"/>
    <property type="project" value="UniProtKB"/>
</dbReference>
<dbReference type="Gene3D" id="6.10.140.2100">
    <property type="match status" value="1"/>
</dbReference>
<dbReference type="Gene3D" id="6.10.140.2110">
    <property type="match status" value="1"/>
</dbReference>
<dbReference type="InterPro" id="IPR000971">
    <property type="entry name" value="Globin"/>
</dbReference>
<dbReference type="InterPro" id="IPR009050">
    <property type="entry name" value="Globin-like_sf"/>
</dbReference>
<dbReference type="InterPro" id="IPR002335">
    <property type="entry name" value="Myoglobin"/>
</dbReference>
<dbReference type="PANTHER" id="PTHR47132">
    <property type="entry name" value="MYOGLOBIN"/>
    <property type="match status" value="1"/>
</dbReference>
<dbReference type="PANTHER" id="PTHR47132:SF1">
    <property type="entry name" value="MYOGLOBIN"/>
    <property type="match status" value="1"/>
</dbReference>
<dbReference type="Pfam" id="PF00042">
    <property type="entry name" value="Globin"/>
    <property type="match status" value="1"/>
</dbReference>
<dbReference type="PRINTS" id="PR00613">
    <property type="entry name" value="MYOGLOBIN"/>
</dbReference>
<dbReference type="SUPFAM" id="SSF46458">
    <property type="entry name" value="Globin-like"/>
    <property type="match status" value="1"/>
</dbReference>
<dbReference type="PROSITE" id="PS01033">
    <property type="entry name" value="GLOBIN"/>
    <property type="match status" value="1"/>
</dbReference>
<proteinExistence type="evidence at protein level"/>
<reference key="1">
    <citation type="journal article" date="1978" name="Biochim. Biophys. Acta">
        <title>The myoglobin of an echidna (Tachyglossus aculeatus aculeatus).</title>
        <authorList>
            <person name="Castillo O."/>
            <person name="Jones L.T."/>
            <person name="Lehmann H."/>
        </authorList>
    </citation>
    <scope>PROTEIN SEQUENCE OF 2-154</scope>
</reference>
<gene>
    <name type="primary">MB</name>
</gene>
<sequence length="154" mass="17197">MGLSDGEWQLVLKVWGKVETDITGHGQDVLIRLFKTHPETLEKFDKFKHLKTEDEMKASADLKKHGGVVLTALGSILKKKGQHEAELKPLAQSHATKHKISIKFLEFISEAIIHVLQSKHSADFGADAQAAMGKALELFRNDMATKYKEFGFQG</sequence>